<comment type="function">
    <text evidence="1">Catalyzes the hydrolysis of 3-deoxy-D-manno-octulosonate 8-phosphate (KDO 8-P) to 3-deoxy-D-manno-octulosonate (KDO) and inorganic phosphate.</text>
</comment>
<comment type="catalytic activity">
    <reaction evidence="1">
        <text>3-deoxy-alpha-D-manno-2-octulosonate-8-phosphate + H2O = 3-deoxy-alpha-D-manno-oct-2-ulosonate + phosphate</text>
        <dbReference type="Rhea" id="RHEA:11500"/>
        <dbReference type="ChEBI" id="CHEBI:15377"/>
        <dbReference type="ChEBI" id="CHEBI:43474"/>
        <dbReference type="ChEBI" id="CHEBI:85985"/>
        <dbReference type="ChEBI" id="CHEBI:85986"/>
        <dbReference type="EC" id="3.1.3.45"/>
    </reaction>
</comment>
<comment type="cofactor">
    <cofactor evidence="1">
        <name>Mg(2+)</name>
        <dbReference type="ChEBI" id="CHEBI:18420"/>
    </cofactor>
</comment>
<comment type="pathway">
    <text evidence="1">Carbohydrate biosynthesis; 3-deoxy-D-manno-octulosonate biosynthesis; 3-deoxy-D-manno-octulosonate from D-ribulose 5-phosphate: step 3/3.</text>
</comment>
<comment type="pathway">
    <text evidence="1">Bacterial outer membrane biogenesis; lipopolysaccharide biosynthesis.</text>
</comment>
<comment type="subunit">
    <text evidence="1">Homotetramer.</text>
</comment>
<comment type="similarity">
    <text evidence="3">Belongs to the KdsC family.</text>
</comment>
<feature type="chain" id="PRO_0000201701" description="3-deoxy-D-manno-octulosonate 8-phosphate phosphatase KdsC">
    <location>
        <begin position="1"/>
        <end position="188"/>
    </location>
</feature>
<feature type="binding site" evidence="2">
    <location>
        <position position="32"/>
    </location>
    <ligand>
        <name>Mg(2+)</name>
        <dbReference type="ChEBI" id="CHEBI:18420"/>
    </ligand>
</feature>
<feature type="binding site" evidence="2">
    <location>
        <position position="34"/>
    </location>
    <ligand>
        <name>Mg(2+)</name>
        <dbReference type="ChEBI" id="CHEBI:18420"/>
    </ligand>
</feature>
<feature type="binding site" evidence="2">
    <location>
        <position position="34"/>
    </location>
    <ligand>
        <name>substrate</name>
    </ligand>
</feature>
<feature type="binding site" evidence="2">
    <location>
        <begin position="55"/>
        <end position="59"/>
    </location>
    <ligand>
        <name>substrate</name>
    </ligand>
</feature>
<feature type="binding site" evidence="2">
    <location>
        <position position="63"/>
    </location>
    <ligand>
        <name>substrate</name>
    </ligand>
</feature>
<feature type="binding site" evidence="2">
    <location>
        <position position="78"/>
    </location>
    <ligand>
        <name>substrate</name>
    </ligand>
</feature>
<feature type="binding site" evidence="2">
    <location>
        <position position="86"/>
    </location>
    <ligand>
        <name>substrate</name>
    </ligand>
</feature>
<feature type="binding site" evidence="2">
    <location>
        <position position="102"/>
    </location>
    <ligand>
        <name>substrate</name>
    </ligand>
</feature>
<feature type="binding site" evidence="2">
    <location>
        <position position="125"/>
    </location>
    <ligand>
        <name>Mg(2+)</name>
        <dbReference type="ChEBI" id="CHEBI:18420"/>
    </ligand>
</feature>
<organism>
    <name type="scientific">Shigella flexneri</name>
    <dbReference type="NCBI Taxonomy" id="623"/>
    <lineage>
        <taxon>Bacteria</taxon>
        <taxon>Pseudomonadati</taxon>
        <taxon>Pseudomonadota</taxon>
        <taxon>Gammaproteobacteria</taxon>
        <taxon>Enterobacterales</taxon>
        <taxon>Enterobacteriaceae</taxon>
        <taxon>Shigella</taxon>
    </lineage>
</organism>
<dbReference type="EC" id="3.1.3.45" evidence="1"/>
<dbReference type="EMBL" id="AE005674">
    <property type="protein sequence ID" value="AAN44704.1"/>
    <property type="molecule type" value="Genomic_DNA"/>
</dbReference>
<dbReference type="EMBL" id="AE014073">
    <property type="protein sequence ID" value="AAP18518.1"/>
    <property type="molecule type" value="Genomic_DNA"/>
</dbReference>
<dbReference type="RefSeq" id="WP_000030016.1">
    <property type="nucleotide sequence ID" value="NZ_WPGW01000004.1"/>
</dbReference>
<dbReference type="SMR" id="P67654"/>
<dbReference type="STRING" id="198214.SF3238"/>
<dbReference type="PaxDb" id="198214-SF3238"/>
<dbReference type="KEGG" id="sfl:SF3238"/>
<dbReference type="KEGG" id="sfx:S3456"/>
<dbReference type="PATRIC" id="fig|198214.7.peg.3839"/>
<dbReference type="HOGENOM" id="CLU_106694_0_1_6"/>
<dbReference type="UniPathway" id="UPA00030"/>
<dbReference type="UniPathway" id="UPA00357">
    <property type="reaction ID" value="UER00475"/>
</dbReference>
<dbReference type="Proteomes" id="UP000001006">
    <property type="component" value="Chromosome"/>
</dbReference>
<dbReference type="Proteomes" id="UP000002673">
    <property type="component" value="Chromosome"/>
</dbReference>
<dbReference type="GO" id="GO:0019143">
    <property type="term" value="F:3-deoxy-manno-octulosonate-8-phosphatase activity"/>
    <property type="evidence" value="ECO:0007669"/>
    <property type="project" value="UniProtKB-EC"/>
</dbReference>
<dbReference type="GO" id="GO:0046872">
    <property type="term" value="F:metal ion binding"/>
    <property type="evidence" value="ECO:0007669"/>
    <property type="project" value="UniProtKB-KW"/>
</dbReference>
<dbReference type="GO" id="GO:0008781">
    <property type="term" value="F:N-acylneuraminate cytidylyltransferase activity"/>
    <property type="evidence" value="ECO:0007669"/>
    <property type="project" value="TreeGrafter"/>
</dbReference>
<dbReference type="GO" id="GO:0009103">
    <property type="term" value="P:lipopolysaccharide biosynthetic process"/>
    <property type="evidence" value="ECO:0007669"/>
    <property type="project" value="UniProtKB-UniPathway"/>
</dbReference>
<dbReference type="CDD" id="cd01630">
    <property type="entry name" value="HAD_KDO-like"/>
    <property type="match status" value="1"/>
</dbReference>
<dbReference type="FunFam" id="3.40.50.1000:FF:000029">
    <property type="entry name" value="3-deoxy-D-manno-octulosonate 8-phosphate phosphatase KdsC"/>
    <property type="match status" value="1"/>
</dbReference>
<dbReference type="Gene3D" id="3.40.50.1000">
    <property type="entry name" value="HAD superfamily/HAD-like"/>
    <property type="match status" value="1"/>
</dbReference>
<dbReference type="InterPro" id="IPR050793">
    <property type="entry name" value="CMP-NeuNAc_synthase"/>
</dbReference>
<dbReference type="InterPro" id="IPR036412">
    <property type="entry name" value="HAD-like_sf"/>
</dbReference>
<dbReference type="InterPro" id="IPR023214">
    <property type="entry name" value="HAD_sf"/>
</dbReference>
<dbReference type="InterPro" id="IPR010023">
    <property type="entry name" value="KdsC_fam"/>
</dbReference>
<dbReference type="NCBIfam" id="TIGR01670">
    <property type="entry name" value="KdsC-phosphatas"/>
    <property type="match status" value="1"/>
</dbReference>
<dbReference type="NCBIfam" id="NF007019">
    <property type="entry name" value="PRK09484.1"/>
    <property type="match status" value="1"/>
</dbReference>
<dbReference type="PANTHER" id="PTHR21485">
    <property type="entry name" value="HAD SUPERFAMILY MEMBERS CMAS AND KDSC"/>
    <property type="match status" value="1"/>
</dbReference>
<dbReference type="PANTHER" id="PTHR21485:SF6">
    <property type="entry name" value="N-ACYLNEURAMINATE CYTIDYLYLTRANSFERASE-RELATED"/>
    <property type="match status" value="1"/>
</dbReference>
<dbReference type="Pfam" id="PF08282">
    <property type="entry name" value="Hydrolase_3"/>
    <property type="match status" value="1"/>
</dbReference>
<dbReference type="PIRSF" id="PIRSF006118">
    <property type="entry name" value="KDO8-P_Ptase"/>
    <property type="match status" value="1"/>
</dbReference>
<dbReference type="SFLD" id="SFLDG01138">
    <property type="entry name" value="C1.6.2:_Deoxy-d-mannose-octulo"/>
    <property type="match status" value="1"/>
</dbReference>
<dbReference type="SFLD" id="SFLDG01136">
    <property type="entry name" value="C1.6:_Phosphoserine_Phosphatas"/>
    <property type="match status" value="1"/>
</dbReference>
<dbReference type="SUPFAM" id="SSF56784">
    <property type="entry name" value="HAD-like"/>
    <property type="match status" value="1"/>
</dbReference>
<accession>P67654</accession>
<accession>Q83JF3</accession>
<accession>Q8FD72</accession>
<evidence type="ECO:0000250" key="1">
    <source>
        <dbReference type="UniProtKB" id="A0A140N5J7"/>
    </source>
</evidence>
<evidence type="ECO:0000250" key="2">
    <source>
        <dbReference type="UniProtKB" id="P67653"/>
    </source>
</evidence>
<evidence type="ECO:0000305" key="3"/>
<reference key="1">
    <citation type="journal article" date="2002" name="Nucleic Acids Res.">
        <title>Genome sequence of Shigella flexneri 2a: insights into pathogenicity through comparison with genomes of Escherichia coli K12 and O157.</title>
        <authorList>
            <person name="Jin Q."/>
            <person name="Yuan Z."/>
            <person name="Xu J."/>
            <person name="Wang Y."/>
            <person name="Shen Y."/>
            <person name="Lu W."/>
            <person name="Wang J."/>
            <person name="Liu H."/>
            <person name="Yang J."/>
            <person name="Yang F."/>
            <person name="Zhang X."/>
            <person name="Zhang J."/>
            <person name="Yang G."/>
            <person name="Wu H."/>
            <person name="Qu D."/>
            <person name="Dong J."/>
            <person name="Sun L."/>
            <person name="Xue Y."/>
            <person name="Zhao A."/>
            <person name="Gao Y."/>
            <person name="Zhu J."/>
            <person name="Kan B."/>
            <person name="Ding K."/>
            <person name="Chen S."/>
            <person name="Cheng H."/>
            <person name="Yao Z."/>
            <person name="He B."/>
            <person name="Chen R."/>
            <person name="Ma D."/>
            <person name="Qiang B."/>
            <person name="Wen Y."/>
            <person name="Hou Y."/>
            <person name="Yu J."/>
        </authorList>
    </citation>
    <scope>NUCLEOTIDE SEQUENCE [LARGE SCALE GENOMIC DNA]</scope>
    <source>
        <strain>301 / Serotype 2a</strain>
    </source>
</reference>
<reference key="2">
    <citation type="journal article" date="2003" name="Infect. Immun.">
        <title>Complete genome sequence and comparative genomics of Shigella flexneri serotype 2a strain 2457T.</title>
        <authorList>
            <person name="Wei J."/>
            <person name="Goldberg M.B."/>
            <person name="Burland V."/>
            <person name="Venkatesan M.M."/>
            <person name="Deng W."/>
            <person name="Fournier G."/>
            <person name="Mayhew G.F."/>
            <person name="Plunkett G. III"/>
            <person name="Rose D.J."/>
            <person name="Darling A."/>
            <person name="Mau B."/>
            <person name="Perna N.T."/>
            <person name="Payne S.M."/>
            <person name="Runyen-Janecky L.J."/>
            <person name="Zhou S."/>
            <person name="Schwartz D.C."/>
            <person name="Blattner F.R."/>
        </authorList>
    </citation>
    <scope>NUCLEOTIDE SEQUENCE [LARGE SCALE GENOMIC DNA]</scope>
    <source>
        <strain>ATCC 700930 / 2457T / Serotype 2a</strain>
    </source>
</reference>
<name>KDSC_SHIFL</name>
<sequence>MSKAGASLATCYGPVSADVMAKAENIRLLILDVDGVLSDGLIYMGNNGEELKAFNVRDGYGIRCALTSDIEVAIITGRKAKLVEDRCATLGITHLYQGQSNKLIAFSDLLEKLAIAPENVAYVGDDLIDWPVMEKVGLSVAVADAHPLLIPRADYVTRIAGGRGAVREVCDLLLLAQGKLDEAKGQSI</sequence>
<keyword id="KW-0378">Hydrolase</keyword>
<keyword id="KW-0448">Lipopolysaccharide biosynthesis</keyword>
<keyword id="KW-0460">Magnesium</keyword>
<keyword id="KW-0479">Metal-binding</keyword>
<keyword id="KW-1185">Reference proteome</keyword>
<protein>
    <recommendedName>
        <fullName>3-deoxy-D-manno-octulosonate 8-phosphate phosphatase KdsC</fullName>
        <ecNumber evidence="1">3.1.3.45</ecNumber>
    </recommendedName>
    <alternativeName>
        <fullName>KDO 8-P phosphatase</fullName>
    </alternativeName>
</protein>
<proteinExistence type="inferred from homology"/>
<gene>
    <name type="primary">kdsC</name>
    <name type="ordered locus">SF3238</name>
    <name type="ordered locus">S3456</name>
</gene>